<sequence>MDYYTILGVAKTATPEEIKKAYRKLAVKYHPDKNPGDAEAERRFKEVSEAYEVLGDAQKRESYDRYGKDGPFAGAGGFGGAGMGNMEDALRTFMGAFGGDFGGNGGGFFEGLFGGLGEAFGMRGGSESSRQGASKKVHITLSFEEAAKGVEKELLVSGYKSCDACSGSGANTAKGVKVCDRCKGSGQVVQSRGFFSMASTCPDCSGEGRVITDPCSVCRGQGRIKDKRSVHVNIPAGVDSGMRLKMEGYGDAGQNGAPAGDLYVFIDVEPHPVFERHGDDLVLELPIGFVDAALGIKKEIPTLLKEGTCRLSIPEGIQSGTVLKVRGQGFPNVHGKSRGDLLVRVSVETPQHLSNEQKDLLRQFAATEKAENFPKKRSFLDKIKGFFSDFAV</sequence>
<protein>
    <recommendedName>
        <fullName evidence="1">Chaperone protein DnaJ</fullName>
    </recommendedName>
</protein>
<reference key="1">
    <citation type="journal article" date="1998" name="Science">
        <title>Genome sequence of an obligate intracellular pathogen of humans: Chlamydia trachomatis.</title>
        <authorList>
            <person name="Stephens R.S."/>
            <person name="Kalman S."/>
            <person name="Lammel C.J."/>
            <person name="Fan J."/>
            <person name="Marathe R."/>
            <person name="Aravind L."/>
            <person name="Mitchell W.P."/>
            <person name="Olinger L."/>
            <person name="Tatusov R.L."/>
            <person name="Zhao Q."/>
            <person name="Koonin E.V."/>
            <person name="Davis R.W."/>
        </authorList>
    </citation>
    <scope>NUCLEOTIDE SEQUENCE [LARGE SCALE GENOMIC DNA]</scope>
    <source>
        <strain>ATCC VR-885 / DSM 19411 / UW-3/Cx</strain>
    </source>
</reference>
<name>DNAJ_CHLTR</name>
<evidence type="ECO:0000255" key="1">
    <source>
        <dbReference type="HAMAP-Rule" id="MF_01152"/>
    </source>
</evidence>
<keyword id="KW-0143">Chaperone</keyword>
<keyword id="KW-0963">Cytoplasm</keyword>
<keyword id="KW-0235">DNA replication</keyword>
<keyword id="KW-0479">Metal-binding</keyword>
<keyword id="KW-1185">Reference proteome</keyword>
<keyword id="KW-0677">Repeat</keyword>
<keyword id="KW-0346">Stress response</keyword>
<keyword id="KW-0862">Zinc</keyword>
<keyword id="KW-0863">Zinc-finger</keyword>
<proteinExistence type="inferred from homology"/>
<gene>
    <name evidence="1" type="primary">dnaJ</name>
    <name type="ordered locus">CT_341</name>
</gene>
<accession>O84345</accession>
<dbReference type="EMBL" id="AE001273">
    <property type="protein sequence ID" value="AAC67936.1"/>
    <property type="molecule type" value="Genomic_DNA"/>
</dbReference>
<dbReference type="PIR" id="H71526">
    <property type="entry name" value="H71526"/>
</dbReference>
<dbReference type="RefSeq" id="NP_219848.1">
    <property type="nucleotide sequence ID" value="NC_000117.1"/>
</dbReference>
<dbReference type="RefSeq" id="WP_009873740.1">
    <property type="nucleotide sequence ID" value="NC_000117.1"/>
</dbReference>
<dbReference type="SMR" id="O84345"/>
<dbReference type="FunCoup" id="O84345">
    <property type="interactions" value="270"/>
</dbReference>
<dbReference type="STRING" id="272561.CT_341"/>
<dbReference type="EnsemblBacteria" id="AAC67936">
    <property type="protein sequence ID" value="AAC67936"/>
    <property type="gene ID" value="CT_341"/>
</dbReference>
<dbReference type="GeneID" id="884775"/>
<dbReference type="KEGG" id="ctr:CT_341"/>
<dbReference type="PATRIC" id="fig|272561.5.peg.368"/>
<dbReference type="HOGENOM" id="CLU_017633_0_7_0"/>
<dbReference type="InParanoid" id="O84345"/>
<dbReference type="OrthoDB" id="9779889at2"/>
<dbReference type="Proteomes" id="UP000000431">
    <property type="component" value="Chromosome"/>
</dbReference>
<dbReference type="GO" id="GO:0005737">
    <property type="term" value="C:cytoplasm"/>
    <property type="evidence" value="ECO:0000318"/>
    <property type="project" value="GO_Central"/>
</dbReference>
<dbReference type="GO" id="GO:0005524">
    <property type="term" value="F:ATP binding"/>
    <property type="evidence" value="ECO:0007669"/>
    <property type="project" value="InterPro"/>
</dbReference>
<dbReference type="GO" id="GO:0031072">
    <property type="term" value="F:heat shock protein binding"/>
    <property type="evidence" value="ECO:0007669"/>
    <property type="project" value="InterPro"/>
</dbReference>
<dbReference type="GO" id="GO:0051082">
    <property type="term" value="F:unfolded protein binding"/>
    <property type="evidence" value="ECO:0000318"/>
    <property type="project" value="GO_Central"/>
</dbReference>
<dbReference type="GO" id="GO:0008270">
    <property type="term" value="F:zinc ion binding"/>
    <property type="evidence" value="ECO:0007669"/>
    <property type="project" value="UniProtKB-UniRule"/>
</dbReference>
<dbReference type="GO" id="GO:0051085">
    <property type="term" value="P:chaperone cofactor-dependent protein refolding"/>
    <property type="evidence" value="ECO:0000318"/>
    <property type="project" value="GO_Central"/>
</dbReference>
<dbReference type="GO" id="GO:0006260">
    <property type="term" value="P:DNA replication"/>
    <property type="evidence" value="ECO:0007669"/>
    <property type="project" value="UniProtKB-KW"/>
</dbReference>
<dbReference type="GO" id="GO:0042026">
    <property type="term" value="P:protein refolding"/>
    <property type="evidence" value="ECO:0000318"/>
    <property type="project" value="GO_Central"/>
</dbReference>
<dbReference type="GO" id="GO:0009408">
    <property type="term" value="P:response to heat"/>
    <property type="evidence" value="ECO:0007669"/>
    <property type="project" value="InterPro"/>
</dbReference>
<dbReference type="CDD" id="cd06257">
    <property type="entry name" value="DnaJ"/>
    <property type="match status" value="1"/>
</dbReference>
<dbReference type="CDD" id="cd10747">
    <property type="entry name" value="DnaJ_C"/>
    <property type="match status" value="1"/>
</dbReference>
<dbReference type="CDD" id="cd10719">
    <property type="entry name" value="DnaJ_zf"/>
    <property type="match status" value="1"/>
</dbReference>
<dbReference type="FunFam" id="1.10.287.110:FF:000034">
    <property type="entry name" value="Chaperone protein DnaJ"/>
    <property type="match status" value="1"/>
</dbReference>
<dbReference type="FunFam" id="2.60.260.20:FF:000005">
    <property type="entry name" value="Chaperone protein dnaJ 1, mitochondrial"/>
    <property type="match status" value="1"/>
</dbReference>
<dbReference type="FunFam" id="2.10.230.10:FF:000002">
    <property type="entry name" value="Molecular chaperone DnaJ"/>
    <property type="match status" value="1"/>
</dbReference>
<dbReference type="Gene3D" id="1.10.287.110">
    <property type="entry name" value="DnaJ domain"/>
    <property type="match status" value="1"/>
</dbReference>
<dbReference type="Gene3D" id="2.10.230.10">
    <property type="entry name" value="Heat shock protein DnaJ, cysteine-rich domain"/>
    <property type="match status" value="1"/>
</dbReference>
<dbReference type="Gene3D" id="2.60.260.20">
    <property type="entry name" value="Urease metallochaperone UreE, N-terminal domain"/>
    <property type="match status" value="2"/>
</dbReference>
<dbReference type="HAMAP" id="MF_01152">
    <property type="entry name" value="DnaJ"/>
    <property type="match status" value="1"/>
</dbReference>
<dbReference type="InterPro" id="IPR012724">
    <property type="entry name" value="DnaJ"/>
</dbReference>
<dbReference type="InterPro" id="IPR002939">
    <property type="entry name" value="DnaJ_C"/>
</dbReference>
<dbReference type="InterPro" id="IPR001623">
    <property type="entry name" value="DnaJ_domain"/>
</dbReference>
<dbReference type="InterPro" id="IPR018253">
    <property type="entry name" value="DnaJ_domain_CS"/>
</dbReference>
<dbReference type="InterPro" id="IPR008971">
    <property type="entry name" value="HSP40/DnaJ_pept-bd"/>
</dbReference>
<dbReference type="InterPro" id="IPR001305">
    <property type="entry name" value="HSP_DnaJ_Cys-rich_dom"/>
</dbReference>
<dbReference type="InterPro" id="IPR036410">
    <property type="entry name" value="HSP_DnaJ_Cys-rich_dom_sf"/>
</dbReference>
<dbReference type="InterPro" id="IPR036869">
    <property type="entry name" value="J_dom_sf"/>
</dbReference>
<dbReference type="NCBIfam" id="TIGR02349">
    <property type="entry name" value="DnaJ_bact"/>
    <property type="match status" value="1"/>
</dbReference>
<dbReference type="NCBIfam" id="NF008035">
    <property type="entry name" value="PRK10767.1"/>
    <property type="match status" value="1"/>
</dbReference>
<dbReference type="NCBIfam" id="NF010877">
    <property type="entry name" value="PRK14284.1"/>
    <property type="match status" value="1"/>
</dbReference>
<dbReference type="PANTHER" id="PTHR43096:SF48">
    <property type="entry name" value="CHAPERONE PROTEIN DNAJ"/>
    <property type="match status" value="1"/>
</dbReference>
<dbReference type="PANTHER" id="PTHR43096">
    <property type="entry name" value="DNAJ HOMOLOG 1, MITOCHONDRIAL-RELATED"/>
    <property type="match status" value="1"/>
</dbReference>
<dbReference type="Pfam" id="PF00226">
    <property type="entry name" value="DnaJ"/>
    <property type="match status" value="1"/>
</dbReference>
<dbReference type="Pfam" id="PF01556">
    <property type="entry name" value="DnaJ_C"/>
    <property type="match status" value="1"/>
</dbReference>
<dbReference type="Pfam" id="PF00684">
    <property type="entry name" value="DnaJ_CXXCXGXG"/>
    <property type="match status" value="1"/>
</dbReference>
<dbReference type="PRINTS" id="PR00625">
    <property type="entry name" value="JDOMAIN"/>
</dbReference>
<dbReference type="SMART" id="SM00271">
    <property type="entry name" value="DnaJ"/>
    <property type="match status" value="1"/>
</dbReference>
<dbReference type="SUPFAM" id="SSF46565">
    <property type="entry name" value="Chaperone J-domain"/>
    <property type="match status" value="1"/>
</dbReference>
<dbReference type="SUPFAM" id="SSF57938">
    <property type="entry name" value="DnaJ/Hsp40 cysteine-rich domain"/>
    <property type="match status" value="1"/>
</dbReference>
<dbReference type="SUPFAM" id="SSF49493">
    <property type="entry name" value="HSP40/DnaJ peptide-binding domain"/>
    <property type="match status" value="2"/>
</dbReference>
<dbReference type="PROSITE" id="PS00636">
    <property type="entry name" value="DNAJ_1"/>
    <property type="match status" value="1"/>
</dbReference>
<dbReference type="PROSITE" id="PS50076">
    <property type="entry name" value="DNAJ_2"/>
    <property type="match status" value="1"/>
</dbReference>
<dbReference type="PROSITE" id="PS51188">
    <property type="entry name" value="ZF_CR"/>
    <property type="match status" value="1"/>
</dbReference>
<organism>
    <name type="scientific">Chlamydia trachomatis serovar D (strain ATCC VR-885 / DSM 19411 / UW-3/Cx)</name>
    <dbReference type="NCBI Taxonomy" id="272561"/>
    <lineage>
        <taxon>Bacteria</taxon>
        <taxon>Pseudomonadati</taxon>
        <taxon>Chlamydiota</taxon>
        <taxon>Chlamydiia</taxon>
        <taxon>Chlamydiales</taxon>
        <taxon>Chlamydiaceae</taxon>
        <taxon>Chlamydia/Chlamydophila group</taxon>
        <taxon>Chlamydia</taxon>
    </lineage>
</organism>
<feature type="chain" id="PRO_0000070760" description="Chaperone protein DnaJ">
    <location>
        <begin position="1"/>
        <end position="392"/>
    </location>
</feature>
<feature type="domain" description="J" evidence="1">
    <location>
        <begin position="2"/>
        <end position="67"/>
    </location>
</feature>
<feature type="repeat" description="CXXCXGXG motif">
    <location>
        <begin position="162"/>
        <end position="169"/>
    </location>
</feature>
<feature type="repeat" description="CXXCXGXG motif">
    <location>
        <begin position="179"/>
        <end position="186"/>
    </location>
</feature>
<feature type="repeat" description="CXXCXGXG motif">
    <location>
        <begin position="201"/>
        <end position="208"/>
    </location>
</feature>
<feature type="repeat" description="CXXCXGXG motif">
    <location>
        <begin position="215"/>
        <end position="222"/>
    </location>
</feature>
<feature type="zinc finger region" description="CR-type" evidence="1">
    <location>
        <begin position="149"/>
        <end position="227"/>
    </location>
</feature>
<feature type="binding site" evidence="1">
    <location>
        <position position="162"/>
    </location>
    <ligand>
        <name>Zn(2+)</name>
        <dbReference type="ChEBI" id="CHEBI:29105"/>
        <label>1</label>
    </ligand>
</feature>
<feature type="binding site" evidence="1">
    <location>
        <position position="165"/>
    </location>
    <ligand>
        <name>Zn(2+)</name>
        <dbReference type="ChEBI" id="CHEBI:29105"/>
        <label>1</label>
    </ligand>
</feature>
<feature type="binding site" evidence="1">
    <location>
        <position position="179"/>
    </location>
    <ligand>
        <name>Zn(2+)</name>
        <dbReference type="ChEBI" id="CHEBI:29105"/>
        <label>2</label>
    </ligand>
</feature>
<feature type="binding site" evidence="1">
    <location>
        <position position="182"/>
    </location>
    <ligand>
        <name>Zn(2+)</name>
        <dbReference type="ChEBI" id="CHEBI:29105"/>
        <label>2</label>
    </ligand>
</feature>
<feature type="binding site" evidence="1">
    <location>
        <position position="201"/>
    </location>
    <ligand>
        <name>Zn(2+)</name>
        <dbReference type="ChEBI" id="CHEBI:29105"/>
        <label>2</label>
    </ligand>
</feature>
<feature type="binding site" evidence="1">
    <location>
        <position position="204"/>
    </location>
    <ligand>
        <name>Zn(2+)</name>
        <dbReference type="ChEBI" id="CHEBI:29105"/>
        <label>2</label>
    </ligand>
</feature>
<feature type="binding site" evidence="1">
    <location>
        <position position="215"/>
    </location>
    <ligand>
        <name>Zn(2+)</name>
        <dbReference type="ChEBI" id="CHEBI:29105"/>
        <label>1</label>
    </ligand>
</feature>
<feature type="binding site" evidence="1">
    <location>
        <position position="218"/>
    </location>
    <ligand>
        <name>Zn(2+)</name>
        <dbReference type="ChEBI" id="CHEBI:29105"/>
        <label>1</label>
    </ligand>
</feature>
<comment type="function">
    <text evidence="1">Participates actively in the response to hyperosmotic and heat shock by preventing the aggregation of stress-denatured proteins and by disaggregating proteins, also in an autonomous, DnaK-independent fashion. Unfolded proteins bind initially to DnaJ; upon interaction with the DnaJ-bound protein, DnaK hydrolyzes its bound ATP, resulting in the formation of a stable complex. GrpE releases ADP from DnaK; ATP binding to DnaK triggers the release of the substrate protein, thus completing the reaction cycle. Several rounds of ATP-dependent interactions between DnaJ, DnaK and GrpE are required for fully efficient folding. Also involved, together with DnaK and GrpE, in the DNA replication of plasmids through activation of initiation proteins.</text>
</comment>
<comment type="cofactor">
    <cofactor evidence="1">
        <name>Zn(2+)</name>
        <dbReference type="ChEBI" id="CHEBI:29105"/>
    </cofactor>
    <text evidence="1">Binds 2 Zn(2+) ions per monomer.</text>
</comment>
<comment type="subunit">
    <text evidence="1">Homodimer.</text>
</comment>
<comment type="subcellular location">
    <subcellularLocation>
        <location evidence="1">Cytoplasm</location>
    </subcellularLocation>
</comment>
<comment type="domain">
    <text evidence="1">The J domain is necessary and sufficient to stimulate DnaK ATPase activity. Zinc center 1 plays an important role in the autonomous, DnaK-independent chaperone activity of DnaJ. Zinc center 2 is essential for interaction with DnaK and for DnaJ activity.</text>
</comment>
<comment type="similarity">
    <text evidence="1">Belongs to the DnaJ family.</text>
</comment>